<dbReference type="EMBL" id="CP001634">
    <property type="protein sequence ID" value="ACR80575.1"/>
    <property type="molecule type" value="Genomic_DNA"/>
</dbReference>
<dbReference type="RefSeq" id="WP_015869218.1">
    <property type="nucleotide sequence ID" value="NC_012785.1"/>
</dbReference>
<dbReference type="SMR" id="C5CGQ6"/>
<dbReference type="STRING" id="521045.Kole_1894"/>
<dbReference type="KEGG" id="kol:Kole_1894"/>
<dbReference type="eggNOG" id="COG0255">
    <property type="taxonomic scope" value="Bacteria"/>
</dbReference>
<dbReference type="HOGENOM" id="CLU_158491_2_0_0"/>
<dbReference type="OrthoDB" id="9815192at2"/>
<dbReference type="Proteomes" id="UP000002382">
    <property type="component" value="Chromosome"/>
</dbReference>
<dbReference type="GO" id="GO:0022625">
    <property type="term" value="C:cytosolic large ribosomal subunit"/>
    <property type="evidence" value="ECO:0007669"/>
    <property type="project" value="TreeGrafter"/>
</dbReference>
<dbReference type="GO" id="GO:0003735">
    <property type="term" value="F:structural constituent of ribosome"/>
    <property type="evidence" value="ECO:0007669"/>
    <property type="project" value="InterPro"/>
</dbReference>
<dbReference type="GO" id="GO:0006412">
    <property type="term" value="P:translation"/>
    <property type="evidence" value="ECO:0007669"/>
    <property type="project" value="UniProtKB-UniRule"/>
</dbReference>
<dbReference type="CDD" id="cd00427">
    <property type="entry name" value="Ribosomal_L29_HIP"/>
    <property type="match status" value="1"/>
</dbReference>
<dbReference type="FunFam" id="1.10.287.310:FF:000001">
    <property type="entry name" value="50S ribosomal protein L29"/>
    <property type="match status" value="1"/>
</dbReference>
<dbReference type="Gene3D" id="1.10.287.310">
    <property type="match status" value="1"/>
</dbReference>
<dbReference type="HAMAP" id="MF_00374">
    <property type="entry name" value="Ribosomal_uL29"/>
    <property type="match status" value="1"/>
</dbReference>
<dbReference type="InterPro" id="IPR050063">
    <property type="entry name" value="Ribosomal_protein_uL29"/>
</dbReference>
<dbReference type="InterPro" id="IPR001854">
    <property type="entry name" value="Ribosomal_uL29"/>
</dbReference>
<dbReference type="InterPro" id="IPR018254">
    <property type="entry name" value="Ribosomal_uL29_CS"/>
</dbReference>
<dbReference type="InterPro" id="IPR036049">
    <property type="entry name" value="Ribosomal_uL29_sf"/>
</dbReference>
<dbReference type="NCBIfam" id="TIGR00012">
    <property type="entry name" value="L29"/>
    <property type="match status" value="1"/>
</dbReference>
<dbReference type="PANTHER" id="PTHR10916">
    <property type="entry name" value="60S RIBOSOMAL PROTEIN L35/50S RIBOSOMAL PROTEIN L29"/>
    <property type="match status" value="1"/>
</dbReference>
<dbReference type="PANTHER" id="PTHR10916:SF0">
    <property type="entry name" value="LARGE RIBOSOMAL SUBUNIT PROTEIN UL29C"/>
    <property type="match status" value="1"/>
</dbReference>
<dbReference type="Pfam" id="PF00831">
    <property type="entry name" value="Ribosomal_L29"/>
    <property type="match status" value="1"/>
</dbReference>
<dbReference type="SUPFAM" id="SSF46561">
    <property type="entry name" value="Ribosomal protein L29 (L29p)"/>
    <property type="match status" value="1"/>
</dbReference>
<dbReference type="PROSITE" id="PS00579">
    <property type="entry name" value="RIBOSOMAL_L29"/>
    <property type="match status" value="1"/>
</dbReference>
<evidence type="ECO:0000255" key="1">
    <source>
        <dbReference type="HAMAP-Rule" id="MF_00374"/>
    </source>
</evidence>
<evidence type="ECO:0000305" key="2"/>
<comment type="similarity">
    <text evidence="1">Belongs to the universal ribosomal protein uL29 family.</text>
</comment>
<proteinExistence type="inferred from homology"/>
<accession>C5CGQ6</accession>
<keyword id="KW-1185">Reference proteome</keyword>
<keyword id="KW-0687">Ribonucleoprotein</keyword>
<keyword id="KW-0689">Ribosomal protein</keyword>
<sequence length="66" mass="7980">MKATELQKFTDEELKQMLDDLKRKLMDLRFQLEMNKLTNTSQIKFVKRDIARIKTILRGRELGVRR</sequence>
<organism>
    <name type="scientific">Kosmotoga olearia (strain ATCC BAA-1733 / DSM 21960 / TBF 19.5.1)</name>
    <dbReference type="NCBI Taxonomy" id="521045"/>
    <lineage>
        <taxon>Bacteria</taxon>
        <taxon>Thermotogati</taxon>
        <taxon>Thermotogota</taxon>
        <taxon>Thermotogae</taxon>
        <taxon>Kosmotogales</taxon>
        <taxon>Kosmotogaceae</taxon>
        <taxon>Kosmotoga</taxon>
    </lineage>
</organism>
<name>RL29_KOSOT</name>
<feature type="chain" id="PRO_1000205631" description="Large ribosomal subunit protein uL29">
    <location>
        <begin position="1"/>
        <end position="66"/>
    </location>
</feature>
<gene>
    <name evidence="1" type="primary">rpmC</name>
    <name type="ordered locus">Kole_1894</name>
</gene>
<protein>
    <recommendedName>
        <fullName evidence="1">Large ribosomal subunit protein uL29</fullName>
    </recommendedName>
    <alternativeName>
        <fullName evidence="2">50S ribosomal protein L29</fullName>
    </alternativeName>
</protein>
<reference key="1">
    <citation type="submission" date="2009-06" db="EMBL/GenBank/DDBJ databases">
        <title>Complete sequence of Thermotogales bacterium TBF 19.5.1.</title>
        <authorList>
            <consortium name="US DOE Joint Genome Institute"/>
            <person name="Lucas S."/>
            <person name="Copeland A."/>
            <person name="Lapidus A."/>
            <person name="Glavina del Rio T."/>
            <person name="Tice H."/>
            <person name="Bruce D."/>
            <person name="Goodwin L."/>
            <person name="Pitluck S."/>
            <person name="Chertkov O."/>
            <person name="Brettin T."/>
            <person name="Detter J.C."/>
            <person name="Han C."/>
            <person name="Schmutz J."/>
            <person name="Larimer F."/>
            <person name="Land M."/>
            <person name="Hauser L."/>
            <person name="Kyrpides N."/>
            <person name="Ovchinnikova G."/>
            <person name="Noll K."/>
        </authorList>
    </citation>
    <scope>NUCLEOTIDE SEQUENCE [LARGE SCALE GENOMIC DNA]</scope>
    <source>
        <strain>ATCC BAA-1733 / DSM 21960 / TBF 19.5.1</strain>
    </source>
</reference>